<proteinExistence type="inferred from homology"/>
<dbReference type="EC" id="2.7.7.6" evidence="1"/>
<dbReference type="EMBL" id="CP000304">
    <property type="protein sequence ID" value="ABP78474.1"/>
    <property type="molecule type" value="Genomic_DNA"/>
</dbReference>
<dbReference type="RefSeq" id="WP_011911981.1">
    <property type="nucleotide sequence ID" value="NC_009434.1"/>
</dbReference>
<dbReference type="SMR" id="A4VHM3"/>
<dbReference type="GeneID" id="66819919"/>
<dbReference type="KEGG" id="psa:PST_0777"/>
<dbReference type="eggNOG" id="COG0085">
    <property type="taxonomic scope" value="Bacteria"/>
</dbReference>
<dbReference type="HOGENOM" id="CLU_000524_4_1_6"/>
<dbReference type="Proteomes" id="UP000000233">
    <property type="component" value="Chromosome"/>
</dbReference>
<dbReference type="GO" id="GO:0000428">
    <property type="term" value="C:DNA-directed RNA polymerase complex"/>
    <property type="evidence" value="ECO:0007669"/>
    <property type="project" value="UniProtKB-KW"/>
</dbReference>
<dbReference type="GO" id="GO:0003677">
    <property type="term" value="F:DNA binding"/>
    <property type="evidence" value="ECO:0007669"/>
    <property type="project" value="UniProtKB-UniRule"/>
</dbReference>
<dbReference type="GO" id="GO:0003899">
    <property type="term" value="F:DNA-directed RNA polymerase activity"/>
    <property type="evidence" value="ECO:0007669"/>
    <property type="project" value="UniProtKB-UniRule"/>
</dbReference>
<dbReference type="GO" id="GO:0032549">
    <property type="term" value="F:ribonucleoside binding"/>
    <property type="evidence" value="ECO:0007669"/>
    <property type="project" value="InterPro"/>
</dbReference>
<dbReference type="GO" id="GO:0006351">
    <property type="term" value="P:DNA-templated transcription"/>
    <property type="evidence" value="ECO:0007669"/>
    <property type="project" value="UniProtKB-UniRule"/>
</dbReference>
<dbReference type="CDD" id="cd00653">
    <property type="entry name" value="RNA_pol_B_RPB2"/>
    <property type="match status" value="1"/>
</dbReference>
<dbReference type="FunFam" id="2.40.270.10:FF:000003">
    <property type="entry name" value="DNA-directed RNA polymerase subunit beta"/>
    <property type="match status" value="1"/>
</dbReference>
<dbReference type="FunFam" id="2.40.50.100:FF:000006">
    <property type="entry name" value="DNA-directed RNA polymerase subunit beta"/>
    <property type="match status" value="1"/>
</dbReference>
<dbReference type="FunFam" id="2.40.50.150:FF:000001">
    <property type="entry name" value="DNA-directed RNA polymerase subunit beta"/>
    <property type="match status" value="1"/>
</dbReference>
<dbReference type="FunFam" id="3.90.1110.10:FF:000001">
    <property type="entry name" value="DNA-directed RNA polymerase subunit beta"/>
    <property type="match status" value="1"/>
</dbReference>
<dbReference type="FunFam" id="3.90.1110.10:FF:000004">
    <property type="entry name" value="DNA-directed RNA polymerase subunit beta"/>
    <property type="match status" value="1"/>
</dbReference>
<dbReference type="FunFam" id="3.90.1800.10:FF:000001">
    <property type="entry name" value="DNA-directed RNA polymerase subunit beta"/>
    <property type="match status" value="1"/>
</dbReference>
<dbReference type="Gene3D" id="2.40.50.100">
    <property type="match status" value="1"/>
</dbReference>
<dbReference type="Gene3D" id="2.40.50.150">
    <property type="match status" value="1"/>
</dbReference>
<dbReference type="Gene3D" id="3.90.1100.10">
    <property type="match status" value="2"/>
</dbReference>
<dbReference type="Gene3D" id="6.10.140.1670">
    <property type="match status" value="1"/>
</dbReference>
<dbReference type="Gene3D" id="2.30.150.10">
    <property type="entry name" value="DNA-directed RNA polymerase, beta subunit, external 1 domain"/>
    <property type="match status" value="1"/>
</dbReference>
<dbReference type="Gene3D" id="2.40.270.10">
    <property type="entry name" value="DNA-directed RNA polymerase, subunit 2, domain 6"/>
    <property type="match status" value="1"/>
</dbReference>
<dbReference type="Gene3D" id="3.90.1800.10">
    <property type="entry name" value="RNA polymerase alpha subunit dimerisation domain"/>
    <property type="match status" value="1"/>
</dbReference>
<dbReference type="Gene3D" id="3.90.1110.10">
    <property type="entry name" value="RNA polymerase Rpb2, domain 2"/>
    <property type="match status" value="1"/>
</dbReference>
<dbReference type="HAMAP" id="MF_01321">
    <property type="entry name" value="RNApol_bact_RpoB"/>
    <property type="match status" value="1"/>
</dbReference>
<dbReference type="InterPro" id="IPR042107">
    <property type="entry name" value="DNA-dir_RNA_pol_bsu_ext_1_sf"/>
</dbReference>
<dbReference type="InterPro" id="IPR019462">
    <property type="entry name" value="DNA-dir_RNA_pol_bsu_external_1"/>
</dbReference>
<dbReference type="InterPro" id="IPR015712">
    <property type="entry name" value="DNA-dir_RNA_pol_su2"/>
</dbReference>
<dbReference type="InterPro" id="IPR007120">
    <property type="entry name" value="DNA-dir_RNAP_su2_dom"/>
</dbReference>
<dbReference type="InterPro" id="IPR037033">
    <property type="entry name" value="DNA-dir_RNAP_su2_hyb_sf"/>
</dbReference>
<dbReference type="InterPro" id="IPR010243">
    <property type="entry name" value="RNA_pol_bsu_bac"/>
</dbReference>
<dbReference type="InterPro" id="IPR007121">
    <property type="entry name" value="RNA_pol_bsu_CS"/>
</dbReference>
<dbReference type="InterPro" id="IPR007644">
    <property type="entry name" value="RNA_pol_bsu_protrusion"/>
</dbReference>
<dbReference type="InterPro" id="IPR007642">
    <property type="entry name" value="RNA_pol_Rpb2_2"/>
</dbReference>
<dbReference type="InterPro" id="IPR037034">
    <property type="entry name" value="RNA_pol_Rpb2_2_sf"/>
</dbReference>
<dbReference type="InterPro" id="IPR007645">
    <property type="entry name" value="RNA_pol_Rpb2_3"/>
</dbReference>
<dbReference type="InterPro" id="IPR007641">
    <property type="entry name" value="RNA_pol_Rpb2_7"/>
</dbReference>
<dbReference type="InterPro" id="IPR014724">
    <property type="entry name" value="RNA_pol_RPB2_OB-fold"/>
</dbReference>
<dbReference type="NCBIfam" id="NF001616">
    <property type="entry name" value="PRK00405.1"/>
    <property type="match status" value="1"/>
</dbReference>
<dbReference type="NCBIfam" id="TIGR02013">
    <property type="entry name" value="rpoB"/>
    <property type="match status" value="1"/>
</dbReference>
<dbReference type="PANTHER" id="PTHR20856">
    <property type="entry name" value="DNA-DIRECTED RNA POLYMERASE I SUBUNIT 2"/>
    <property type="match status" value="1"/>
</dbReference>
<dbReference type="Pfam" id="PF04563">
    <property type="entry name" value="RNA_pol_Rpb2_1"/>
    <property type="match status" value="1"/>
</dbReference>
<dbReference type="Pfam" id="PF04561">
    <property type="entry name" value="RNA_pol_Rpb2_2"/>
    <property type="match status" value="2"/>
</dbReference>
<dbReference type="Pfam" id="PF04565">
    <property type="entry name" value="RNA_pol_Rpb2_3"/>
    <property type="match status" value="1"/>
</dbReference>
<dbReference type="Pfam" id="PF10385">
    <property type="entry name" value="RNA_pol_Rpb2_45"/>
    <property type="match status" value="1"/>
</dbReference>
<dbReference type="Pfam" id="PF00562">
    <property type="entry name" value="RNA_pol_Rpb2_6"/>
    <property type="match status" value="1"/>
</dbReference>
<dbReference type="Pfam" id="PF04560">
    <property type="entry name" value="RNA_pol_Rpb2_7"/>
    <property type="match status" value="1"/>
</dbReference>
<dbReference type="SUPFAM" id="SSF64484">
    <property type="entry name" value="beta and beta-prime subunits of DNA dependent RNA-polymerase"/>
    <property type="match status" value="1"/>
</dbReference>
<dbReference type="PROSITE" id="PS01166">
    <property type="entry name" value="RNA_POL_BETA"/>
    <property type="match status" value="1"/>
</dbReference>
<feature type="chain" id="PRO_0000300377" description="DNA-directed RNA polymerase subunit beta">
    <location>
        <begin position="1"/>
        <end position="1356"/>
    </location>
</feature>
<reference key="1">
    <citation type="journal article" date="2008" name="Proc. Natl. Acad. Sci. U.S.A.">
        <title>Nitrogen fixation island and rhizosphere competence traits in the genome of root-associated Pseudomonas stutzeri A1501.</title>
        <authorList>
            <person name="Yan Y."/>
            <person name="Yang J."/>
            <person name="Dou Y."/>
            <person name="Chen M."/>
            <person name="Ping S."/>
            <person name="Peng J."/>
            <person name="Lu W."/>
            <person name="Zhang W."/>
            <person name="Yao Z."/>
            <person name="Li H."/>
            <person name="Liu W."/>
            <person name="He S."/>
            <person name="Geng L."/>
            <person name="Zhang X."/>
            <person name="Yang F."/>
            <person name="Yu H."/>
            <person name="Zhan Y."/>
            <person name="Li D."/>
            <person name="Lin Z."/>
            <person name="Wang Y."/>
            <person name="Elmerich C."/>
            <person name="Lin M."/>
            <person name="Jin Q."/>
        </authorList>
    </citation>
    <scope>NUCLEOTIDE SEQUENCE [LARGE SCALE GENOMIC DNA]</scope>
    <source>
        <strain>A1501</strain>
    </source>
</reference>
<protein>
    <recommendedName>
        <fullName evidence="1">DNA-directed RNA polymerase subunit beta</fullName>
        <shortName evidence="1">RNAP subunit beta</shortName>
        <ecNumber evidence="1">2.7.7.6</ecNumber>
    </recommendedName>
    <alternativeName>
        <fullName evidence="1">RNA polymerase subunit beta</fullName>
    </alternativeName>
    <alternativeName>
        <fullName evidence="1">Transcriptase subunit beta</fullName>
    </alternativeName>
</protein>
<evidence type="ECO:0000255" key="1">
    <source>
        <dbReference type="HAMAP-Rule" id="MF_01321"/>
    </source>
</evidence>
<comment type="function">
    <text evidence="1">DNA-dependent RNA polymerase catalyzes the transcription of DNA into RNA using the four ribonucleoside triphosphates as substrates.</text>
</comment>
<comment type="catalytic activity">
    <reaction evidence="1">
        <text>RNA(n) + a ribonucleoside 5'-triphosphate = RNA(n+1) + diphosphate</text>
        <dbReference type="Rhea" id="RHEA:21248"/>
        <dbReference type="Rhea" id="RHEA-COMP:14527"/>
        <dbReference type="Rhea" id="RHEA-COMP:17342"/>
        <dbReference type="ChEBI" id="CHEBI:33019"/>
        <dbReference type="ChEBI" id="CHEBI:61557"/>
        <dbReference type="ChEBI" id="CHEBI:140395"/>
        <dbReference type="EC" id="2.7.7.6"/>
    </reaction>
</comment>
<comment type="subunit">
    <text evidence="1">The RNAP catalytic core consists of 2 alpha, 1 beta, 1 beta' and 1 omega subunit. When a sigma factor is associated with the core the holoenzyme is formed, which can initiate transcription.</text>
</comment>
<comment type="similarity">
    <text evidence="1">Belongs to the RNA polymerase beta chain family.</text>
</comment>
<organism>
    <name type="scientific">Stutzerimonas stutzeri (strain A1501)</name>
    <name type="common">Pseudomonas stutzeri</name>
    <dbReference type="NCBI Taxonomy" id="379731"/>
    <lineage>
        <taxon>Bacteria</taxon>
        <taxon>Pseudomonadati</taxon>
        <taxon>Pseudomonadota</taxon>
        <taxon>Gammaproteobacteria</taxon>
        <taxon>Pseudomonadales</taxon>
        <taxon>Pseudomonadaceae</taxon>
        <taxon>Stutzerimonas</taxon>
    </lineage>
</organism>
<accession>A4VHM3</accession>
<keyword id="KW-0240">DNA-directed RNA polymerase</keyword>
<keyword id="KW-0548">Nucleotidyltransferase</keyword>
<keyword id="KW-1185">Reference proteome</keyword>
<keyword id="KW-0804">Transcription</keyword>
<keyword id="KW-0808">Transferase</keyword>
<sequence length="1356" mass="150971">MAYSYTEKKRIRKDFSKLPHVMDVPYLLAIQLDSYREFLQAGATKDQFRDIGLHAAFKSVFPIISYSGNAALEYVGYRLGEPAFDVKECVLRGVTFAVPLRVKVRLIIFDKESSNKAIKDIKEQEVYMGEIPLMTENGTFIINGTERVIVSQLHRSPGVFFDHDRGKTHSSGKLLYSARIIPYRGSWLDFEFDPKDAVFVRIDRRRKLPASVLLRALNYSTEEILDAFYDTNVFHVKGETLALELVPQRLRGEIATFDIKDDSGKVIVEQGRRITARHINQLDKSGIKELEMPMDYVLGRTVAKAIVHPATGEIIAECNTELTVDVMAKIVKAQVVRFETLYTNDIDCGPFISDTLKIDSTTNQLEALVEIYRMMRPGEPPTKDAAETLFNNLFFAAERYDLSAVGRMKFNRRIGRTEIEGSGVLSREDIVAVLKTLVDIRNGKGIVDDIDHLGNRRVRCVGEMAENQFRVGLVRVERAVKERLSMAESEGLMPQDLINAKPVAAAVKEFFGSSQLSQFMDQNNPLSEITHKRRVSALGPGGLTRERAGFEVRDVHPTHYGRVCPIETPEGPNIGLINSLAAYARTNQYGFLESPYRVVKDGEVTDEIVFLSAIEEADHVIAQASAKLDGRKLVDELVAVRHLNEFTVKAPEDVTLMDVSPKQVVSVAASLIPFLEHDDANRALMGSNMQRQAVPTLRSDKPLVGTGMERNVARDSGVCVVARRGGVIDSVDASRIVVRVRDDEVETGEAGVDIYNLTKYTRSNQNTCINQRPLVRKGDVVARGDIMADGPSTDMGELALGQNMRVAFMPWNGYNFEDSILLSERVVQEDRFTTIHIQELTCVSRDTKLGPEEITADIPNVGEAALNKLDEAGIVYVGAEVGPGDILVGKVTPKGETQLTPEEKLLRAIFGEKASDVKDTSLRVPTGTKGTVIDVQVFIRDGVERDSRALAIEKMQLDEIRKDLNEEFRIVEGATFERLRSALVGATAEGGAGLKKGVVITDEILDGLEHGQWFKLRMAEDALNEQLEKAQAYLSDRRQLLDDKFEDKKRKLQQGDDLAPGVLKIVKVYLAIKRRIQPGDKMAGRHGNKGVVSVIMPVEDMPHDANGTPVDIVLNPLGVPSRMNVGQILETHLGLAAKGLGEKINLMLEEQRKVAELRKFLHEIYNEIGGRQENLDDLSDQEVLDLANNLRKGVPMATPVFDGAKEREIKAMLKLADLPESGQMQLFDGRTGNAFERTTTVGYMYMLKLNHLVDDKMHARSTGSYSLVTQQPLGGKAQFGGQRFGEMEVWALEAYGAAYTLQEMLTVKSDDVNGRTKMYKNIVDGDHRMEAGMPESFNVLIKEIRSLGIDIDLETE</sequence>
<gene>
    <name evidence="1" type="primary">rpoB</name>
    <name type="ordered locus">PST_0777</name>
</gene>
<name>RPOB_STUS1</name>